<feature type="signal peptide" evidence="4">
    <location>
        <begin position="1"/>
        <end position="28"/>
    </location>
</feature>
<feature type="chain" id="PRO_0000030746" description="SNAI' A chain">
    <location>
        <begin position="29"/>
        <end position="291"/>
    </location>
</feature>
<feature type="peptide" id="PRO_0000030747" description="Linker peptide" evidence="4">
    <location>
        <begin position="292"/>
        <end position="303"/>
    </location>
</feature>
<feature type="chain" id="PRO_0000030748" description="SNAI' B chain">
    <location>
        <begin position="304"/>
        <end position="569"/>
    </location>
</feature>
<feature type="domain" description="Ricin B-type lectin 1" evidence="3">
    <location>
        <begin position="315"/>
        <end position="435"/>
    </location>
</feature>
<feature type="repeat" description="1-alpha">
    <location>
        <begin position="325"/>
        <end position="365"/>
    </location>
</feature>
<feature type="repeat" description="1-beta">
    <location>
        <begin position="366"/>
        <end position="401"/>
    </location>
</feature>
<feature type="repeat" description="1-gamma">
    <location>
        <begin position="404"/>
        <end position="436"/>
    </location>
</feature>
<feature type="domain" description="Ricin B-type lectin 2" evidence="3">
    <location>
        <begin position="437"/>
        <end position="565"/>
    </location>
</feature>
<feature type="repeat" description="2-alpha">
    <location>
        <begin position="448"/>
        <end position="488"/>
    </location>
</feature>
<feature type="repeat" description="2-beta">
    <location>
        <begin position="492"/>
        <end position="530"/>
    </location>
</feature>
<feature type="repeat" description="2-gamma">
    <location>
        <begin position="533"/>
        <end position="566"/>
    </location>
</feature>
<feature type="active site" evidence="1">
    <location>
        <position position="201"/>
    </location>
</feature>
<feature type="glycosylation site" description="N-linked (GlcNAc...) asparagine" evidence="2">
    <location>
        <position position="40"/>
    </location>
</feature>
<feature type="disulfide bond" description="Interchain (between A and B chains)" evidence="3">
    <location>
        <begin position="286"/>
        <end position="311"/>
    </location>
</feature>
<feature type="disulfide bond" evidence="3">
    <location>
        <begin position="328"/>
        <end position="347"/>
    </location>
</feature>
<feature type="disulfide bond" evidence="3">
    <location>
        <begin position="369"/>
        <end position="381"/>
    </location>
</feature>
<feature type="disulfide bond" evidence="3">
    <location>
        <begin position="451"/>
        <end position="466"/>
    </location>
</feature>
<feature type="disulfide bond" evidence="3">
    <location>
        <begin position="495"/>
        <end position="512"/>
    </location>
</feature>
<reference key="1">
    <citation type="journal article" date="1997" name="Eur. J. Biochem.">
        <title>Elderberry (Sambucus nigra) bark contains two structurally different Neu5Ac(alpha2,6)Gal/GalNAc-binding type 2 ribosome-inactivating proteins.</title>
        <authorList>
            <person name="van Damme E.J.M."/>
            <person name="Roy S."/>
            <person name="Barre A."/>
            <person name="Citores L."/>
            <person name="Mostafapous K."/>
            <person name="Rouge P."/>
            <person name="Van Leuven F."/>
            <person name="Girbes T."/>
            <person name="Goldstein I.J."/>
            <person name="Peumans W.J."/>
        </authorList>
    </citation>
    <scope>NUCLEOTIDE SEQUENCE [MRNA]</scope>
    <scope>PROTEIN SEQUENCE OF 29-38 AND 304-309</scope>
    <scope>FUNCTION</scope>
    <scope>SUBUNIT</scope>
    <source>
        <tissue>Bark</tissue>
    </source>
</reference>
<protein>
    <recommendedName>
        <fullName>Ribosome-inactivating protein SNAI'</fullName>
    </recommendedName>
    <component>
        <recommendedName>
            <fullName>SNAI' A chain</fullName>
            <ecNumber>3.2.2.22</ecNumber>
        </recommendedName>
        <alternativeName>
            <fullName>rRNA N-glycosidase</fullName>
        </alternativeName>
    </component>
    <component>
        <recommendedName>
            <fullName>Linker peptide</fullName>
        </recommendedName>
    </component>
    <component>
        <recommendedName>
            <fullName>SNAI' B chain</fullName>
        </recommendedName>
    </component>
</protein>
<sequence length="569" mass="62598">MKVVATILYLVVLAICGLGIHGAHPTHSAPPTVYPSVSFNLTEANSNEYRHFLQELRGKVILGSHRAFDLPVLNPESKVSDSDRFVLVRLTNPSRKKVTLAIDVVTFYVVAFAQNDRSYFFSGSSEVQRENLFVDTTQEDLNFKGDYTSLEHQVGFGRVYIPLGPKSLAQSISSLSTYKSSAGDNKRLARSLLVVIQMVSEAARFRYIQLRIQASITDAKEFTPDLLMLSMENKWSSMSSEIQQAQPGGAFAQVVKLLDQRNHPIDVTNFRRLFQLTSVAVLLHGCPTVTKMPAYIIKMPVFNGGEDEERCSVVEEVTRRIGGRDGFCAEVKNGDEKDGTPVQLSSCGEQSNQQWTFSTDGTIQSLGKCLTTSSSVMIYNCKVVPPESTKWVVSIDGTITNPRSGLVLTAPKAAEGTLVSLEKNVHAARQGWIVGNVEPLVTFIVGYEQMCLETNPGNNDVSLGDCSVKSASKVDQKWALYGDGTIRVNNDRSLCVTSEGKSSNEPIIILKCLGWANQRWVFNTDGTISNPDSKLVMHVDQNDVPLRKIILSHPSGTSNQQWIASTHPA</sequence>
<keyword id="KW-0903">Direct protein sequencing</keyword>
<keyword id="KW-1015">Disulfide bond</keyword>
<keyword id="KW-0325">Glycoprotein</keyword>
<keyword id="KW-0326">Glycosidase</keyword>
<keyword id="KW-0378">Hydrolase</keyword>
<keyword id="KW-0430">Lectin</keyword>
<keyword id="KW-0611">Plant defense</keyword>
<keyword id="KW-0652">Protein synthesis inhibitor</keyword>
<keyword id="KW-0677">Repeat</keyword>
<keyword id="KW-0732">Signal</keyword>
<keyword id="KW-0800">Toxin</keyword>
<dbReference type="EC" id="3.2.2.22"/>
<dbReference type="EMBL" id="U66191">
    <property type="protein sequence ID" value="AAC49754.1"/>
    <property type="molecule type" value="mRNA"/>
</dbReference>
<dbReference type="SMR" id="P93543"/>
<dbReference type="GO" id="GO:0030246">
    <property type="term" value="F:carbohydrate binding"/>
    <property type="evidence" value="ECO:0007669"/>
    <property type="project" value="UniProtKB-KW"/>
</dbReference>
<dbReference type="GO" id="GO:0030598">
    <property type="term" value="F:rRNA N-glycosylase activity"/>
    <property type="evidence" value="ECO:0007669"/>
    <property type="project" value="UniProtKB-EC"/>
</dbReference>
<dbReference type="GO" id="GO:0090729">
    <property type="term" value="F:toxin activity"/>
    <property type="evidence" value="ECO:0007669"/>
    <property type="project" value="UniProtKB-KW"/>
</dbReference>
<dbReference type="GO" id="GO:0006952">
    <property type="term" value="P:defense response"/>
    <property type="evidence" value="ECO:0007669"/>
    <property type="project" value="UniProtKB-KW"/>
</dbReference>
<dbReference type="GO" id="GO:0017148">
    <property type="term" value="P:negative regulation of translation"/>
    <property type="evidence" value="ECO:0007669"/>
    <property type="project" value="UniProtKB-KW"/>
</dbReference>
<dbReference type="CDD" id="cd23483">
    <property type="entry name" value="beta-trefoil_Ricin_ebulin-like_rpt1"/>
    <property type="match status" value="1"/>
</dbReference>
<dbReference type="CDD" id="cd23490">
    <property type="entry name" value="beta-trefoil_Ricin_ebulin-like_rpt2"/>
    <property type="match status" value="1"/>
</dbReference>
<dbReference type="Gene3D" id="2.80.10.50">
    <property type="match status" value="2"/>
</dbReference>
<dbReference type="Gene3D" id="3.40.420.10">
    <property type="entry name" value="Ricin (A subunit), domain 1"/>
    <property type="match status" value="1"/>
</dbReference>
<dbReference type="Gene3D" id="4.10.470.10">
    <property type="entry name" value="Ricin (A Subunit), domain 2"/>
    <property type="match status" value="1"/>
</dbReference>
<dbReference type="InterPro" id="IPR036041">
    <property type="entry name" value="Ribosome-inact_prot_sf"/>
</dbReference>
<dbReference type="InterPro" id="IPR017989">
    <property type="entry name" value="Ribosome_inactivat_1/2"/>
</dbReference>
<dbReference type="InterPro" id="IPR001574">
    <property type="entry name" value="Ribosome_inactivat_prot"/>
</dbReference>
<dbReference type="InterPro" id="IPR017988">
    <property type="entry name" value="Ribosome_inactivat_prot_CS"/>
</dbReference>
<dbReference type="InterPro" id="IPR016138">
    <property type="entry name" value="Ribosome_inactivat_prot_sub1"/>
</dbReference>
<dbReference type="InterPro" id="IPR016139">
    <property type="entry name" value="Ribosome_inactivat_prot_sub2"/>
</dbReference>
<dbReference type="InterPro" id="IPR035992">
    <property type="entry name" value="Ricin_B-like_lectins"/>
</dbReference>
<dbReference type="InterPro" id="IPR000772">
    <property type="entry name" value="Ricin_B_lectin"/>
</dbReference>
<dbReference type="PANTHER" id="PTHR33453">
    <property type="match status" value="1"/>
</dbReference>
<dbReference type="PANTHER" id="PTHR33453:SF34">
    <property type="entry name" value="RIBOSOME-INACTIVATING PROTEIN"/>
    <property type="match status" value="1"/>
</dbReference>
<dbReference type="Pfam" id="PF00652">
    <property type="entry name" value="Ricin_B_lectin"/>
    <property type="match status" value="2"/>
</dbReference>
<dbReference type="Pfam" id="PF00161">
    <property type="entry name" value="RIP"/>
    <property type="match status" value="1"/>
</dbReference>
<dbReference type="PRINTS" id="PR00396">
    <property type="entry name" value="SHIGARICIN"/>
</dbReference>
<dbReference type="SMART" id="SM00458">
    <property type="entry name" value="RICIN"/>
    <property type="match status" value="2"/>
</dbReference>
<dbReference type="SUPFAM" id="SSF56371">
    <property type="entry name" value="Ribosome inactivating proteins (RIP)"/>
    <property type="match status" value="1"/>
</dbReference>
<dbReference type="SUPFAM" id="SSF50370">
    <property type="entry name" value="Ricin B-like lectins"/>
    <property type="match status" value="2"/>
</dbReference>
<dbReference type="PROSITE" id="PS50231">
    <property type="entry name" value="RICIN_B_LECTIN"/>
    <property type="match status" value="2"/>
</dbReference>
<dbReference type="PROSITE" id="PS00275">
    <property type="entry name" value="SHIGA_RICIN"/>
    <property type="match status" value="1"/>
</dbReference>
<accession>P93543</accession>
<comment type="function">
    <text evidence="4">The A chain is responsible for inhibiting protein synthesis through the catalytic inactivation of 60S ribosomal subunits by removing adenine from position 4,324 of 28S rRNA. The B chain binds to cell receptors and probably facilitates the entry into the cell of the A chain; B chains are also responsible for cell agglutination (lectin activity). Agglutination is inhibited by Neu5Ac(alpha2,6)lactose, and N-linked glycoproteins such as fetuin and orosomucoid.</text>
</comment>
<comment type="catalytic activity">
    <reaction>
        <text>Endohydrolysis of the N-glycosidic bond at one specific adenosine on the 28S rRNA.</text>
        <dbReference type="EC" id="3.2.2.22"/>
    </reaction>
</comment>
<comment type="subunit">
    <text evidence="4">Disulfide-linked dimer of A and B chains.</text>
</comment>
<comment type="domain">
    <text>The B chain is composed of two domains, each domain consists of 3 homologous subdomains (alpha, beta, gamma).</text>
</comment>
<comment type="similarity">
    <text evidence="5">In the N-terminal section; belongs to the ribosome-inactivating protein family. Type 2 RIP subfamily.</text>
</comment>
<evidence type="ECO:0000250" key="1"/>
<evidence type="ECO:0000255" key="2"/>
<evidence type="ECO:0000255" key="3">
    <source>
        <dbReference type="PROSITE-ProRule" id="PRU00174"/>
    </source>
</evidence>
<evidence type="ECO:0000269" key="4">
    <source>
    </source>
</evidence>
<evidence type="ECO:0000305" key="5"/>
<organism>
    <name type="scientific">Sambucus nigra</name>
    <name type="common">European elder</name>
    <dbReference type="NCBI Taxonomy" id="4202"/>
    <lineage>
        <taxon>Eukaryota</taxon>
        <taxon>Viridiplantae</taxon>
        <taxon>Streptophyta</taxon>
        <taxon>Embryophyta</taxon>
        <taxon>Tracheophyta</taxon>
        <taxon>Spermatophyta</taxon>
        <taxon>Magnoliopsida</taxon>
        <taxon>eudicotyledons</taxon>
        <taxon>Gunneridae</taxon>
        <taxon>Pentapetalae</taxon>
        <taxon>asterids</taxon>
        <taxon>campanulids</taxon>
        <taxon>Dipsacales</taxon>
        <taxon>Adoxaceae</taxon>
        <taxon>Sambucus</taxon>
    </lineage>
</organism>
<proteinExistence type="evidence at protein level"/>
<name>RIP1_SAMNI</name>